<reference key="1">
    <citation type="journal article" date="2009" name="BMC Genomics">
        <title>Metabolic analysis of the soil microbe Dechloromonas aromatica str. RCB: indications of a surprisingly complex life-style and cryptic anaerobic pathways for aromatic degradation.</title>
        <authorList>
            <person name="Salinero K.K."/>
            <person name="Keller K."/>
            <person name="Feil W.S."/>
            <person name="Feil H."/>
            <person name="Trong S."/>
            <person name="Di Bartolo G."/>
            <person name="Lapidus A."/>
        </authorList>
    </citation>
    <scope>NUCLEOTIDE SEQUENCE [LARGE SCALE GENOMIC DNA]</scope>
    <source>
        <strain>RCB</strain>
    </source>
</reference>
<protein>
    <recommendedName>
        <fullName evidence="1">Trigger factor</fullName>
        <shortName evidence="1">TF</shortName>
        <ecNumber evidence="1">5.2.1.8</ecNumber>
    </recommendedName>
    <alternativeName>
        <fullName evidence="1">PPIase</fullName>
    </alternativeName>
</protein>
<feature type="chain" id="PRO_0000256549" description="Trigger factor">
    <location>
        <begin position="1"/>
        <end position="434"/>
    </location>
</feature>
<feature type="domain" description="PPIase FKBP-type" evidence="1">
    <location>
        <begin position="161"/>
        <end position="246"/>
    </location>
</feature>
<accession>Q47FB5</accession>
<organism>
    <name type="scientific">Dechloromonas aromatica (strain RCB)</name>
    <dbReference type="NCBI Taxonomy" id="159087"/>
    <lineage>
        <taxon>Bacteria</taxon>
        <taxon>Pseudomonadati</taxon>
        <taxon>Pseudomonadota</taxon>
        <taxon>Betaproteobacteria</taxon>
        <taxon>Rhodocyclales</taxon>
        <taxon>Azonexaceae</taxon>
        <taxon>Dechloromonas</taxon>
    </lineage>
</organism>
<comment type="function">
    <text evidence="1">Involved in protein export. Acts as a chaperone by maintaining the newly synthesized protein in an open conformation. Functions as a peptidyl-prolyl cis-trans isomerase.</text>
</comment>
<comment type="catalytic activity">
    <reaction evidence="1">
        <text>[protein]-peptidylproline (omega=180) = [protein]-peptidylproline (omega=0)</text>
        <dbReference type="Rhea" id="RHEA:16237"/>
        <dbReference type="Rhea" id="RHEA-COMP:10747"/>
        <dbReference type="Rhea" id="RHEA-COMP:10748"/>
        <dbReference type="ChEBI" id="CHEBI:83833"/>
        <dbReference type="ChEBI" id="CHEBI:83834"/>
        <dbReference type="EC" id="5.2.1.8"/>
    </reaction>
</comment>
<comment type="subcellular location">
    <subcellularLocation>
        <location>Cytoplasm</location>
    </subcellularLocation>
    <text evidence="1">About half TF is bound to the ribosome near the polypeptide exit tunnel while the other half is free in the cytoplasm.</text>
</comment>
<comment type="domain">
    <text evidence="1">Consists of 3 domains; the N-terminus binds the ribosome, the middle domain has PPIase activity, while the C-terminus has intrinsic chaperone activity on its own.</text>
</comment>
<comment type="similarity">
    <text evidence="1">Belongs to the FKBP-type PPIase family. Tig subfamily.</text>
</comment>
<evidence type="ECO:0000255" key="1">
    <source>
        <dbReference type="HAMAP-Rule" id="MF_00303"/>
    </source>
</evidence>
<keyword id="KW-0131">Cell cycle</keyword>
<keyword id="KW-0132">Cell division</keyword>
<keyword id="KW-0143">Chaperone</keyword>
<keyword id="KW-0963">Cytoplasm</keyword>
<keyword id="KW-0413">Isomerase</keyword>
<keyword id="KW-0697">Rotamase</keyword>
<gene>
    <name evidence="1" type="primary">tig</name>
    <name type="ordered locus">Daro_1719</name>
</gene>
<proteinExistence type="inferred from homology"/>
<name>TIG_DECAR</name>
<dbReference type="EC" id="5.2.1.8" evidence="1"/>
<dbReference type="EMBL" id="CP000089">
    <property type="protein sequence ID" value="AAZ46466.1"/>
    <property type="molecule type" value="Genomic_DNA"/>
</dbReference>
<dbReference type="SMR" id="Q47FB5"/>
<dbReference type="STRING" id="159087.Daro_1719"/>
<dbReference type="KEGG" id="dar:Daro_1719"/>
<dbReference type="eggNOG" id="COG0544">
    <property type="taxonomic scope" value="Bacteria"/>
</dbReference>
<dbReference type="HOGENOM" id="CLU_033058_2_0_4"/>
<dbReference type="OrthoDB" id="9767721at2"/>
<dbReference type="GO" id="GO:0005737">
    <property type="term" value="C:cytoplasm"/>
    <property type="evidence" value="ECO:0007669"/>
    <property type="project" value="UniProtKB-SubCell"/>
</dbReference>
<dbReference type="GO" id="GO:0003755">
    <property type="term" value="F:peptidyl-prolyl cis-trans isomerase activity"/>
    <property type="evidence" value="ECO:0007669"/>
    <property type="project" value="UniProtKB-UniRule"/>
</dbReference>
<dbReference type="GO" id="GO:0044183">
    <property type="term" value="F:protein folding chaperone"/>
    <property type="evidence" value="ECO:0007669"/>
    <property type="project" value="TreeGrafter"/>
</dbReference>
<dbReference type="GO" id="GO:0043022">
    <property type="term" value="F:ribosome binding"/>
    <property type="evidence" value="ECO:0007669"/>
    <property type="project" value="TreeGrafter"/>
</dbReference>
<dbReference type="GO" id="GO:0051083">
    <property type="term" value="P:'de novo' cotranslational protein folding"/>
    <property type="evidence" value="ECO:0007669"/>
    <property type="project" value="TreeGrafter"/>
</dbReference>
<dbReference type="GO" id="GO:0051301">
    <property type="term" value="P:cell division"/>
    <property type="evidence" value="ECO:0007669"/>
    <property type="project" value="UniProtKB-KW"/>
</dbReference>
<dbReference type="GO" id="GO:0061077">
    <property type="term" value="P:chaperone-mediated protein folding"/>
    <property type="evidence" value="ECO:0007669"/>
    <property type="project" value="TreeGrafter"/>
</dbReference>
<dbReference type="GO" id="GO:0015031">
    <property type="term" value="P:protein transport"/>
    <property type="evidence" value="ECO:0007669"/>
    <property type="project" value="UniProtKB-UniRule"/>
</dbReference>
<dbReference type="GO" id="GO:0043335">
    <property type="term" value="P:protein unfolding"/>
    <property type="evidence" value="ECO:0007669"/>
    <property type="project" value="TreeGrafter"/>
</dbReference>
<dbReference type="FunFam" id="3.10.50.40:FF:000001">
    <property type="entry name" value="Trigger factor"/>
    <property type="match status" value="1"/>
</dbReference>
<dbReference type="Gene3D" id="3.10.50.40">
    <property type="match status" value="1"/>
</dbReference>
<dbReference type="Gene3D" id="3.30.70.1050">
    <property type="entry name" value="Trigger factor ribosome-binding domain"/>
    <property type="match status" value="1"/>
</dbReference>
<dbReference type="Gene3D" id="1.10.3120.10">
    <property type="entry name" value="Trigger factor, C-terminal domain"/>
    <property type="match status" value="1"/>
</dbReference>
<dbReference type="HAMAP" id="MF_00303">
    <property type="entry name" value="Trigger_factor_Tig"/>
    <property type="match status" value="1"/>
</dbReference>
<dbReference type="InterPro" id="IPR046357">
    <property type="entry name" value="PPIase_dom_sf"/>
</dbReference>
<dbReference type="InterPro" id="IPR001179">
    <property type="entry name" value="PPIase_FKBP_dom"/>
</dbReference>
<dbReference type="InterPro" id="IPR005215">
    <property type="entry name" value="Trig_fac"/>
</dbReference>
<dbReference type="InterPro" id="IPR008880">
    <property type="entry name" value="Trigger_fac_C"/>
</dbReference>
<dbReference type="InterPro" id="IPR037041">
    <property type="entry name" value="Trigger_fac_C_sf"/>
</dbReference>
<dbReference type="InterPro" id="IPR008881">
    <property type="entry name" value="Trigger_fac_ribosome-bd_bac"/>
</dbReference>
<dbReference type="InterPro" id="IPR036611">
    <property type="entry name" value="Trigger_fac_ribosome-bd_sf"/>
</dbReference>
<dbReference type="InterPro" id="IPR027304">
    <property type="entry name" value="Trigger_fact/SurA_dom_sf"/>
</dbReference>
<dbReference type="NCBIfam" id="TIGR00115">
    <property type="entry name" value="tig"/>
    <property type="match status" value="1"/>
</dbReference>
<dbReference type="PANTHER" id="PTHR30560">
    <property type="entry name" value="TRIGGER FACTOR CHAPERONE AND PEPTIDYL-PROLYL CIS/TRANS ISOMERASE"/>
    <property type="match status" value="1"/>
</dbReference>
<dbReference type="PANTHER" id="PTHR30560:SF3">
    <property type="entry name" value="TRIGGER FACTOR-LIKE PROTEIN TIG, CHLOROPLASTIC"/>
    <property type="match status" value="1"/>
</dbReference>
<dbReference type="Pfam" id="PF00254">
    <property type="entry name" value="FKBP_C"/>
    <property type="match status" value="1"/>
</dbReference>
<dbReference type="Pfam" id="PF05698">
    <property type="entry name" value="Trigger_C"/>
    <property type="match status" value="1"/>
</dbReference>
<dbReference type="Pfam" id="PF05697">
    <property type="entry name" value="Trigger_N"/>
    <property type="match status" value="1"/>
</dbReference>
<dbReference type="PIRSF" id="PIRSF003095">
    <property type="entry name" value="Trigger_factor"/>
    <property type="match status" value="1"/>
</dbReference>
<dbReference type="SUPFAM" id="SSF54534">
    <property type="entry name" value="FKBP-like"/>
    <property type="match status" value="1"/>
</dbReference>
<dbReference type="SUPFAM" id="SSF109998">
    <property type="entry name" value="Triger factor/SurA peptide-binding domain-like"/>
    <property type="match status" value="1"/>
</dbReference>
<dbReference type="SUPFAM" id="SSF102735">
    <property type="entry name" value="Trigger factor ribosome-binding domain"/>
    <property type="match status" value="1"/>
</dbReference>
<dbReference type="PROSITE" id="PS50059">
    <property type="entry name" value="FKBP_PPIASE"/>
    <property type="match status" value="1"/>
</dbReference>
<sequence>MEATTAQANELERRVDLSIAIADVEKEMEQRLKRMGKNMKVPGFRPGKVPFNIVKQQYGDQARHEVLSEELDRVFGETVTEKKMRVAGYPRIEPKTTESNSHLEFSAIFEVYPEFTPGDLSGSEVERPVLEVSAAEVDKTLDILRKQRVSYADADRAAAKEDRVVIDFTGKKDGVPFPGGQANDYPFVLGQGMMLPDFENAVEGAKAGETKTFDLTFPADYHAKDLAGQTVQFDITVKQVQAPVLPELDAEFATSMGIADGDVTKMRAEIEANLKREVKRRIEGKLKDQVMEALLKANPITVPVALVDMEIQRLMQAARQDMEQRGMKVKDMPIQPEWFADQAKRRVTLGLILAEVVKTEKLQASPEQVRTMVEETAQSYEHPEEVIRWYYAQPQRLQEVEGVAIENNVVEWVLSKAKVTEKAAVFDELMGQKQ</sequence>